<sequence length="295" mass="32010">MSWLSKLMPSGIRTENTPAKKRSVPEGLWEKCSNCGSALYGPELEENLEVCPKCDHHMAIRARARLNSLFDPDTATTEIAAQLGPVDVLKFKDQKRYGERIKASQKASGEYDALIAMRGTLKGNPLVAAAFDFAFMGGSMGSVVGERFARAAEVALEVGCPFVCFSASGGARMQEGLFSLMQMAKTSAALGRLREAGLPYISVLTHPTTGGVSASFAMLGDINIAEPHALIGFAGPRVIEQTVRETLPEGFQRSEFLLDHGAIDQICDRREMRNRIAELTAMMMRQPHPQDADAA</sequence>
<accession>B2SVN4</accession>
<reference key="1">
    <citation type="journal article" date="2008" name="BMC Genomics">
        <title>Genome sequence and rapid evolution of the rice pathogen Xanthomonas oryzae pv. oryzae PXO99A.</title>
        <authorList>
            <person name="Salzberg S.L."/>
            <person name="Sommer D.D."/>
            <person name="Schatz M.C."/>
            <person name="Phillippy A.M."/>
            <person name="Rabinowicz P.D."/>
            <person name="Tsuge S."/>
            <person name="Furutani A."/>
            <person name="Ochiai H."/>
            <person name="Delcher A.L."/>
            <person name="Kelley D."/>
            <person name="Madupu R."/>
            <person name="Puiu D."/>
            <person name="Radune D."/>
            <person name="Shumway M."/>
            <person name="Trapnell C."/>
            <person name="Aparna G."/>
            <person name="Jha G."/>
            <person name="Pandey A."/>
            <person name="Patil P.B."/>
            <person name="Ishihara H."/>
            <person name="Meyer D.F."/>
            <person name="Szurek B."/>
            <person name="Verdier V."/>
            <person name="Koebnik R."/>
            <person name="Dow J.M."/>
            <person name="Ryan R.P."/>
            <person name="Hirata H."/>
            <person name="Tsuyumu S."/>
            <person name="Won Lee S."/>
            <person name="Seo Y.-S."/>
            <person name="Sriariyanum M."/>
            <person name="Ronald P.C."/>
            <person name="Sonti R.V."/>
            <person name="Van Sluys M.-A."/>
            <person name="Leach J.E."/>
            <person name="White F.F."/>
            <person name="Bogdanove A.J."/>
        </authorList>
    </citation>
    <scope>NUCLEOTIDE SEQUENCE [LARGE SCALE GENOMIC DNA]</scope>
    <source>
        <strain>PXO99A</strain>
    </source>
</reference>
<comment type="function">
    <text evidence="1">Component of the acetyl coenzyme A carboxylase (ACC) complex. Biotin carboxylase (BC) catalyzes the carboxylation of biotin on its carrier protein (BCCP) and then the CO(2) group is transferred by the transcarboxylase to acetyl-CoA to form malonyl-CoA.</text>
</comment>
<comment type="catalytic activity">
    <reaction evidence="1">
        <text>N(6)-carboxybiotinyl-L-lysyl-[protein] + acetyl-CoA = N(6)-biotinyl-L-lysyl-[protein] + malonyl-CoA</text>
        <dbReference type="Rhea" id="RHEA:54728"/>
        <dbReference type="Rhea" id="RHEA-COMP:10505"/>
        <dbReference type="Rhea" id="RHEA-COMP:10506"/>
        <dbReference type="ChEBI" id="CHEBI:57288"/>
        <dbReference type="ChEBI" id="CHEBI:57384"/>
        <dbReference type="ChEBI" id="CHEBI:83144"/>
        <dbReference type="ChEBI" id="CHEBI:83145"/>
        <dbReference type="EC" id="2.1.3.15"/>
    </reaction>
</comment>
<comment type="cofactor">
    <cofactor evidence="1">
        <name>Zn(2+)</name>
        <dbReference type="ChEBI" id="CHEBI:29105"/>
    </cofactor>
    <text evidence="1">Binds 1 zinc ion per subunit.</text>
</comment>
<comment type="pathway">
    <text evidence="1">Lipid metabolism; malonyl-CoA biosynthesis; malonyl-CoA from acetyl-CoA: step 1/1.</text>
</comment>
<comment type="subunit">
    <text evidence="1">Acetyl-CoA carboxylase is a heterohexamer composed of biotin carboxyl carrier protein (AccB), biotin carboxylase (AccC) and two subunits each of ACCase subunit alpha (AccA) and ACCase subunit beta (AccD).</text>
</comment>
<comment type="subcellular location">
    <subcellularLocation>
        <location evidence="1">Cytoplasm</location>
    </subcellularLocation>
</comment>
<comment type="similarity">
    <text evidence="1">Belongs to the AccD/PCCB family.</text>
</comment>
<organism>
    <name type="scientific">Xanthomonas oryzae pv. oryzae (strain PXO99A)</name>
    <dbReference type="NCBI Taxonomy" id="360094"/>
    <lineage>
        <taxon>Bacteria</taxon>
        <taxon>Pseudomonadati</taxon>
        <taxon>Pseudomonadota</taxon>
        <taxon>Gammaproteobacteria</taxon>
        <taxon>Lysobacterales</taxon>
        <taxon>Lysobacteraceae</taxon>
        <taxon>Xanthomonas</taxon>
    </lineage>
</organism>
<name>ACCD_XANOP</name>
<proteinExistence type="inferred from homology"/>
<gene>
    <name evidence="1" type="primary">accD</name>
    <name type="ordered locus">PXO_01273</name>
</gene>
<keyword id="KW-0067">ATP-binding</keyword>
<keyword id="KW-0963">Cytoplasm</keyword>
<keyword id="KW-0275">Fatty acid biosynthesis</keyword>
<keyword id="KW-0276">Fatty acid metabolism</keyword>
<keyword id="KW-0444">Lipid biosynthesis</keyword>
<keyword id="KW-0443">Lipid metabolism</keyword>
<keyword id="KW-0479">Metal-binding</keyword>
<keyword id="KW-0547">Nucleotide-binding</keyword>
<keyword id="KW-0808">Transferase</keyword>
<keyword id="KW-0862">Zinc</keyword>
<keyword id="KW-0863">Zinc-finger</keyword>
<feature type="chain" id="PRO_0000359102" description="Acetyl-coenzyme A carboxylase carboxyl transferase subunit beta">
    <location>
        <begin position="1"/>
        <end position="295"/>
    </location>
</feature>
<feature type="domain" description="CoA carboxyltransferase N-terminal" evidence="2">
    <location>
        <begin position="28"/>
        <end position="295"/>
    </location>
</feature>
<feature type="zinc finger region" description="C4-type" evidence="1">
    <location>
        <begin position="32"/>
        <end position="54"/>
    </location>
</feature>
<feature type="region of interest" description="Disordered" evidence="3">
    <location>
        <begin position="1"/>
        <end position="20"/>
    </location>
</feature>
<feature type="binding site" evidence="1">
    <location>
        <position position="32"/>
    </location>
    <ligand>
        <name>Zn(2+)</name>
        <dbReference type="ChEBI" id="CHEBI:29105"/>
    </ligand>
</feature>
<feature type="binding site" evidence="1">
    <location>
        <position position="35"/>
    </location>
    <ligand>
        <name>Zn(2+)</name>
        <dbReference type="ChEBI" id="CHEBI:29105"/>
    </ligand>
</feature>
<feature type="binding site" evidence="1">
    <location>
        <position position="51"/>
    </location>
    <ligand>
        <name>Zn(2+)</name>
        <dbReference type="ChEBI" id="CHEBI:29105"/>
    </ligand>
</feature>
<feature type="binding site" evidence="1">
    <location>
        <position position="54"/>
    </location>
    <ligand>
        <name>Zn(2+)</name>
        <dbReference type="ChEBI" id="CHEBI:29105"/>
    </ligand>
</feature>
<dbReference type="EC" id="2.1.3.15" evidence="1"/>
<dbReference type="EMBL" id="CP000967">
    <property type="protein sequence ID" value="ACD60108.1"/>
    <property type="molecule type" value="Genomic_DNA"/>
</dbReference>
<dbReference type="RefSeq" id="WP_011259760.1">
    <property type="nucleotide sequence ID" value="NC_010717.2"/>
</dbReference>
<dbReference type="SMR" id="B2SVN4"/>
<dbReference type="GeneID" id="77336961"/>
<dbReference type="KEGG" id="xop:PXO_01273"/>
<dbReference type="eggNOG" id="COG0777">
    <property type="taxonomic scope" value="Bacteria"/>
</dbReference>
<dbReference type="HOGENOM" id="CLU_015486_1_0_6"/>
<dbReference type="UniPathway" id="UPA00655">
    <property type="reaction ID" value="UER00711"/>
</dbReference>
<dbReference type="Proteomes" id="UP000001740">
    <property type="component" value="Chromosome"/>
</dbReference>
<dbReference type="GO" id="GO:0009329">
    <property type="term" value="C:acetate CoA-transferase complex"/>
    <property type="evidence" value="ECO:0007669"/>
    <property type="project" value="TreeGrafter"/>
</dbReference>
<dbReference type="GO" id="GO:0003989">
    <property type="term" value="F:acetyl-CoA carboxylase activity"/>
    <property type="evidence" value="ECO:0007669"/>
    <property type="project" value="InterPro"/>
</dbReference>
<dbReference type="GO" id="GO:0005524">
    <property type="term" value="F:ATP binding"/>
    <property type="evidence" value="ECO:0007669"/>
    <property type="project" value="UniProtKB-KW"/>
</dbReference>
<dbReference type="GO" id="GO:0016743">
    <property type="term" value="F:carboxyl- or carbamoyltransferase activity"/>
    <property type="evidence" value="ECO:0007669"/>
    <property type="project" value="UniProtKB-UniRule"/>
</dbReference>
<dbReference type="GO" id="GO:0008270">
    <property type="term" value="F:zinc ion binding"/>
    <property type="evidence" value="ECO:0007669"/>
    <property type="project" value="UniProtKB-UniRule"/>
</dbReference>
<dbReference type="GO" id="GO:0006633">
    <property type="term" value="P:fatty acid biosynthetic process"/>
    <property type="evidence" value="ECO:0007669"/>
    <property type="project" value="UniProtKB-KW"/>
</dbReference>
<dbReference type="GO" id="GO:2001295">
    <property type="term" value="P:malonyl-CoA biosynthetic process"/>
    <property type="evidence" value="ECO:0007669"/>
    <property type="project" value="UniProtKB-UniRule"/>
</dbReference>
<dbReference type="Gene3D" id="3.90.226.10">
    <property type="entry name" value="2-enoyl-CoA Hydratase, Chain A, domain 1"/>
    <property type="match status" value="1"/>
</dbReference>
<dbReference type="HAMAP" id="MF_01395">
    <property type="entry name" value="AcetylCoA_CT_beta"/>
    <property type="match status" value="1"/>
</dbReference>
<dbReference type="InterPro" id="IPR034733">
    <property type="entry name" value="AcCoA_carboxyl_beta"/>
</dbReference>
<dbReference type="InterPro" id="IPR000438">
    <property type="entry name" value="Acetyl_CoA_COase_Trfase_b_su"/>
</dbReference>
<dbReference type="InterPro" id="IPR029045">
    <property type="entry name" value="ClpP/crotonase-like_dom_sf"/>
</dbReference>
<dbReference type="InterPro" id="IPR011762">
    <property type="entry name" value="COA_CT_N"/>
</dbReference>
<dbReference type="InterPro" id="IPR041010">
    <property type="entry name" value="Znf-ACC"/>
</dbReference>
<dbReference type="NCBIfam" id="TIGR00515">
    <property type="entry name" value="accD"/>
    <property type="match status" value="1"/>
</dbReference>
<dbReference type="PANTHER" id="PTHR42995">
    <property type="entry name" value="ACETYL-COENZYME A CARBOXYLASE CARBOXYL TRANSFERASE SUBUNIT BETA, CHLOROPLASTIC"/>
    <property type="match status" value="1"/>
</dbReference>
<dbReference type="PANTHER" id="PTHR42995:SF5">
    <property type="entry name" value="ACETYL-COENZYME A CARBOXYLASE CARBOXYL TRANSFERASE SUBUNIT BETA, CHLOROPLASTIC"/>
    <property type="match status" value="1"/>
</dbReference>
<dbReference type="Pfam" id="PF01039">
    <property type="entry name" value="Carboxyl_trans"/>
    <property type="match status" value="1"/>
</dbReference>
<dbReference type="Pfam" id="PF17848">
    <property type="entry name" value="Zn_ribbon_ACC"/>
    <property type="match status" value="1"/>
</dbReference>
<dbReference type="PRINTS" id="PR01070">
    <property type="entry name" value="ACCCTRFRASEB"/>
</dbReference>
<dbReference type="SUPFAM" id="SSF52096">
    <property type="entry name" value="ClpP/crotonase"/>
    <property type="match status" value="1"/>
</dbReference>
<dbReference type="PROSITE" id="PS50980">
    <property type="entry name" value="COA_CT_NTER"/>
    <property type="match status" value="1"/>
</dbReference>
<evidence type="ECO:0000255" key="1">
    <source>
        <dbReference type="HAMAP-Rule" id="MF_01395"/>
    </source>
</evidence>
<evidence type="ECO:0000255" key="2">
    <source>
        <dbReference type="PROSITE-ProRule" id="PRU01136"/>
    </source>
</evidence>
<evidence type="ECO:0000256" key="3">
    <source>
        <dbReference type="SAM" id="MobiDB-lite"/>
    </source>
</evidence>
<protein>
    <recommendedName>
        <fullName evidence="1">Acetyl-coenzyme A carboxylase carboxyl transferase subunit beta</fullName>
        <shortName evidence="1">ACCase subunit beta</shortName>
        <shortName evidence="1">Acetyl-CoA carboxylase carboxyltransferase subunit beta</shortName>
        <ecNumber evidence="1">2.1.3.15</ecNumber>
    </recommendedName>
</protein>